<protein>
    <recommendedName>
        <fullName>Multicilin</fullName>
    </recommendedName>
    <alternativeName>
        <fullName>Multiciliate differentiation and DNA synthesis-associated cell cycle protein</fullName>
        <shortName>McIdas protein</shortName>
    </alternativeName>
    <alternativeName>
        <fullName>Protein Idas</fullName>
    </alternativeName>
</protein>
<accession>F7BHS0</accession>
<proteinExistence type="inferred from homology"/>
<name>MCIN_XENTR</name>
<evidence type="ECO:0000250" key="1">
    <source>
        <dbReference type="UniProtKB" id="D6RGH6"/>
    </source>
</evidence>
<evidence type="ECO:0000250" key="2">
    <source>
        <dbReference type="UniProtKB" id="Q08B36"/>
    </source>
</evidence>
<evidence type="ECO:0000256" key="3">
    <source>
        <dbReference type="SAM" id="MobiDB-lite"/>
    </source>
</evidence>
<evidence type="ECO:0000305" key="4"/>
<dbReference type="EMBL" id="AAMC01110993">
    <property type="status" value="NOT_ANNOTATED_CDS"/>
    <property type="molecule type" value="Genomic_DNA"/>
</dbReference>
<dbReference type="RefSeq" id="XP_002941156.1">
    <property type="nucleotide sequence ID" value="XM_002941110.5"/>
</dbReference>
<dbReference type="SMR" id="F7BHS0"/>
<dbReference type="FunCoup" id="F7BHS0">
    <property type="interactions" value="1594"/>
</dbReference>
<dbReference type="STRING" id="8364.ENSXETP00000037329"/>
<dbReference type="PaxDb" id="8364-ENSXETP00000058983"/>
<dbReference type="GeneID" id="100496713"/>
<dbReference type="KEGG" id="xtr:100496713"/>
<dbReference type="AGR" id="Xenbase:XB-GENE-22041448"/>
<dbReference type="CTD" id="345643"/>
<dbReference type="Xenbase" id="XB-GENE-22041448">
    <property type="gene designation" value="mcidas"/>
</dbReference>
<dbReference type="eggNOG" id="ENOG502R4B5">
    <property type="taxonomic scope" value="Eukaryota"/>
</dbReference>
<dbReference type="HOGENOM" id="CLU_063884_0_0_1"/>
<dbReference type="InParanoid" id="F7BHS0"/>
<dbReference type="OMA" id="PCDISPF"/>
<dbReference type="OrthoDB" id="9445365at2759"/>
<dbReference type="PhylomeDB" id="F7BHS0"/>
<dbReference type="Proteomes" id="UP000008143">
    <property type="component" value="Chromosome 1"/>
</dbReference>
<dbReference type="Bgee" id="ENSXETG00000033274">
    <property type="expression patterns" value="Expressed in gastrula and 2 other cell types or tissues"/>
</dbReference>
<dbReference type="GO" id="GO:0005634">
    <property type="term" value="C:nucleus"/>
    <property type="evidence" value="ECO:0000250"/>
    <property type="project" value="UniProtKB"/>
</dbReference>
<dbReference type="GO" id="GO:0098534">
    <property type="term" value="P:centriole assembly"/>
    <property type="evidence" value="ECO:0000250"/>
    <property type="project" value="UniProtKB"/>
</dbReference>
<dbReference type="GO" id="GO:0060271">
    <property type="term" value="P:cilium assembly"/>
    <property type="evidence" value="ECO:0000250"/>
    <property type="project" value="UniProtKB"/>
</dbReference>
<dbReference type="GO" id="GO:0044458">
    <property type="term" value="P:motile cilium assembly"/>
    <property type="evidence" value="ECO:0000250"/>
    <property type="project" value="UniProtKB"/>
</dbReference>
<dbReference type="GO" id="GO:1903251">
    <property type="term" value="P:multi-ciliated epithelial cell differentiation"/>
    <property type="evidence" value="ECO:0000250"/>
    <property type="project" value="UniProtKB"/>
</dbReference>
<dbReference type="GO" id="GO:0045944">
    <property type="term" value="P:positive regulation of transcription by RNA polymerase II"/>
    <property type="evidence" value="ECO:0000250"/>
    <property type="project" value="UniProtKB"/>
</dbReference>
<dbReference type="GO" id="GO:1902017">
    <property type="term" value="P:regulation of cilium assembly"/>
    <property type="evidence" value="ECO:0000250"/>
    <property type="project" value="UniProtKB"/>
</dbReference>
<dbReference type="GO" id="GO:0006275">
    <property type="term" value="P:regulation of DNA replication"/>
    <property type="evidence" value="ECO:0007669"/>
    <property type="project" value="InterPro"/>
</dbReference>
<dbReference type="CDD" id="cd22590">
    <property type="entry name" value="McIdas_CC"/>
    <property type="match status" value="1"/>
</dbReference>
<dbReference type="Gene3D" id="1.20.5.1180">
    <property type="entry name" value="Geminin coiled-coil domain"/>
    <property type="match status" value="1"/>
</dbReference>
<dbReference type="InterPro" id="IPR022786">
    <property type="entry name" value="Geminin/Multicilin"/>
</dbReference>
<dbReference type="PANTHER" id="PTHR13372">
    <property type="entry name" value="GEMININ"/>
    <property type="match status" value="1"/>
</dbReference>
<dbReference type="PANTHER" id="PTHR13372:SF3">
    <property type="entry name" value="MULTICILIN"/>
    <property type="match status" value="1"/>
</dbReference>
<dbReference type="Pfam" id="PF07412">
    <property type="entry name" value="Geminin"/>
    <property type="match status" value="1"/>
</dbReference>
<dbReference type="SUPFAM" id="SSF111469">
    <property type="entry name" value="Geminin coiled-coil domain"/>
    <property type="match status" value="1"/>
</dbReference>
<organism>
    <name type="scientific">Xenopus tropicalis</name>
    <name type="common">Western clawed frog</name>
    <name type="synonym">Silurana tropicalis</name>
    <dbReference type="NCBI Taxonomy" id="8364"/>
    <lineage>
        <taxon>Eukaryota</taxon>
        <taxon>Metazoa</taxon>
        <taxon>Chordata</taxon>
        <taxon>Craniata</taxon>
        <taxon>Vertebrata</taxon>
        <taxon>Euteleostomi</taxon>
        <taxon>Amphibia</taxon>
        <taxon>Batrachia</taxon>
        <taxon>Anura</taxon>
        <taxon>Pipoidea</taxon>
        <taxon>Pipidae</taxon>
        <taxon>Xenopodinae</taxon>
        <taxon>Xenopus</taxon>
        <taxon>Silurana</taxon>
    </lineage>
</organism>
<comment type="function">
    <text evidence="2">Transcription regulator specifically required for multiciliate cell differentiation. Acts in a multiprotein complex containing e2f4 and e2f5 that binds and activate genes required for centriole biogenesis. Activates genes required for centriole assembly (plk4, cep152) and genes specifically required for motile cilia formation (foxj1). Also promotes the deuterosome pathway of centriole biogenesis by activating expression of deup1, but not its paralog cep63.</text>
</comment>
<comment type="subunit">
    <text evidence="2">Component of the EDM complex, at least composed of e2f4, e2f5, mcidas and tfdp1.</text>
</comment>
<comment type="subcellular location">
    <subcellularLocation>
        <location evidence="2">Nucleus</location>
    </subcellularLocation>
</comment>
<comment type="domain">
    <text evidence="2">The TIRT domain mediates interaction with e2f4 and tfdp1.</text>
</comment>
<comment type="similarity">
    <text evidence="4">Belongs to the geminin family.</text>
</comment>
<gene>
    <name type="primary">mcidas</name>
    <name type="synonym">idas</name>
    <name type="synonym">mci</name>
    <name type="synonym">mcin</name>
</gene>
<reference key="1">
    <citation type="journal article" date="2010" name="Science">
        <title>The genome of the Western clawed frog Xenopus tropicalis.</title>
        <authorList>
            <person name="Hellsten U."/>
            <person name="Harland R.M."/>
            <person name="Gilchrist M.J."/>
            <person name="Hendrix D."/>
            <person name="Jurka J."/>
            <person name="Kapitonov V."/>
            <person name="Ovcharenko I."/>
            <person name="Putnam N.H."/>
            <person name="Shu S."/>
            <person name="Taher L."/>
            <person name="Blitz I.L."/>
            <person name="Blumberg B."/>
            <person name="Dichmann D.S."/>
            <person name="Dubchak I."/>
            <person name="Amaya E."/>
            <person name="Detter J.C."/>
            <person name="Fletcher R."/>
            <person name="Gerhard D.S."/>
            <person name="Goodstein D."/>
            <person name="Graves T."/>
            <person name="Grigoriev I.V."/>
            <person name="Grimwood J."/>
            <person name="Kawashima T."/>
            <person name="Lindquist E."/>
            <person name="Lucas S.M."/>
            <person name="Mead P.E."/>
            <person name="Mitros T."/>
            <person name="Ogino H."/>
            <person name="Ohta Y."/>
            <person name="Poliakov A.V."/>
            <person name="Pollet N."/>
            <person name="Robert J."/>
            <person name="Salamov A."/>
            <person name="Sater A.K."/>
            <person name="Schmutz J."/>
            <person name="Terry A."/>
            <person name="Vize P.D."/>
            <person name="Warren W.C."/>
            <person name="Wells D."/>
            <person name="Wills A."/>
            <person name="Wilson R.K."/>
            <person name="Zimmerman L.B."/>
            <person name="Zorn A.M."/>
            <person name="Grainger R."/>
            <person name="Grammer T."/>
            <person name="Khokha M.K."/>
            <person name="Richardson P.M."/>
            <person name="Rokhsar D.S."/>
        </authorList>
    </citation>
    <scope>NUCLEOTIDE SEQUENCE [LARGE SCALE GENOMIC DNA]</scope>
</reference>
<feature type="chain" id="PRO_0000416281" description="Multicilin">
    <location>
        <begin position="1"/>
        <end position="376"/>
    </location>
</feature>
<feature type="region of interest" description="Disordered" evidence="3">
    <location>
        <begin position="230"/>
        <end position="261"/>
    </location>
</feature>
<feature type="region of interest" description="TIRT domain" evidence="2">
    <location>
        <begin position="331"/>
        <end position="376"/>
    </location>
</feature>
<feature type="coiled-coil region" evidence="1">
    <location>
        <begin position="165"/>
        <end position="213"/>
    </location>
</feature>
<keyword id="KW-0010">Activator</keyword>
<keyword id="KW-0131">Cell cycle</keyword>
<keyword id="KW-0970">Cilium biogenesis/degradation</keyword>
<keyword id="KW-0175">Coiled coil</keyword>
<keyword id="KW-0539">Nucleus</keyword>
<keyword id="KW-1185">Reference proteome</keyword>
<keyword id="KW-0804">Transcription</keyword>
<keyword id="KW-0805">Transcription regulation</keyword>
<sequence>MQNRRKAFDKLCPNTMPDLSSRMGKRQSKTEKKLHKNIFTHTGPVTIYVDPPSSVDSAALATIDWQDLADCNSVIQQDAAGGALTEQQQQGHCLPGESDFDLQEFRDAVDQFIADQPSLMQPGLGSSGFQLPCNGSVFEPCMTDTLQPQPDHLLPISVQSIPSTEQYWRDVADHNQKALGDALVENNQLQVSLTEKQEEIASLKEKNIQLNELANQAKHLASVLDKLMKERPKHSSGATQGRLPVKRSLEDFYPQSNEPDSTQVDEILREISKKCNIALMGNELSESKRPRLEPMDTMGWQEEGITKIKMCGAFNGLKTSTGLNSVNLGETELEEDVSFRTSIKEHSTIRTLAFPQGNAFTIRTAAGGYKFRWVPN</sequence>